<name>Y1973_STAAC</name>
<feature type="chain" id="PRO_0000171950" description="UPF0316 protein SACOL1973">
    <location>
        <begin position="1"/>
        <end position="200"/>
    </location>
</feature>
<feature type="transmembrane region" description="Helical" evidence="1">
    <location>
        <begin position="8"/>
        <end position="28"/>
    </location>
</feature>
<feature type="transmembrane region" description="Helical" evidence="1">
    <location>
        <begin position="40"/>
        <end position="60"/>
    </location>
</feature>
<feature type="transmembrane region" description="Helical" evidence="1">
    <location>
        <begin position="66"/>
        <end position="86"/>
    </location>
</feature>
<proteinExistence type="inferred from homology"/>
<sequence>MSFVTENPWLMVLTIFIINVCYVTFLTMRTILTLKGYRYIAASVSFLEVLVYIVGLGLVMSNLDHIQNIIAYAFGFSIGIIVGMKIEEKLALGYTVVNVTSAEYELDLPNELRNLGYGVTHYAAFGRDGSRMVMQILTPRKYERKLMDTIKNLDPKAFIIAYEPRNIHGGFWTKGIRRRKLKDYEPEELESVVEHEIQSK</sequence>
<keyword id="KW-1003">Cell membrane</keyword>
<keyword id="KW-0472">Membrane</keyword>
<keyword id="KW-0812">Transmembrane</keyword>
<keyword id="KW-1133">Transmembrane helix</keyword>
<reference key="1">
    <citation type="journal article" date="2005" name="J. Bacteriol.">
        <title>Insights on evolution of virulence and resistance from the complete genome analysis of an early methicillin-resistant Staphylococcus aureus strain and a biofilm-producing methicillin-resistant Staphylococcus epidermidis strain.</title>
        <authorList>
            <person name="Gill S.R."/>
            <person name="Fouts D.E."/>
            <person name="Archer G.L."/>
            <person name="Mongodin E.F."/>
            <person name="DeBoy R.T."/>
            <person name="Ravel J."/>
            <person name="Paulsen I.T."/>
            <person name="Kolonay J.F."/>
            <person name="Brinkac L.M."/>
            <person name="Beanan M.J."/>
            <person name="Dodson R.J."/>
            <person name="Daugherty S.C."/>
            <person name="Madupu R."/>
            <person name="Angiuoli S.V."/>
            <person name="Durkin A.S."/>
            <person name="Haft D.H."/>
            <person name="Vamathevan J.J."/>
            <person name="Khouri H."/>
            <person name="Utterback T.R."/>
            <person name="Lee C."/>
            <person name="Dimitrov G."/>
            <person name="Jiang L."/>
            <person name="Qin H."/>
            <person name="Weidman J."/>
            <person name="Tran K."/>
            <person name="Kang K.H."/>
            <person name="Hance I.R."/>
            <person name="Nelson K.E."/>
            <person name="Fraser C.M."/>
        </authorList>
    </citation>
    <scope>NUCLEOTIDE SEQUENCE [LARGE SCALE GENOMIC DNA]</scope>
    <source>
        <strain>COL</strain>
    </source>
</reference>
<dbReference type="EMBL" id="CP000046">
    <property type="protein sequence ID" value="AAW36943.1"/>
    <property type="molecule type" value="Genomic_DNA"/>
</dbReference>
<dbReference type="RefSeq" id="WP_000011542.1">
    <property type="nucleotide sequence ID" value="NZ_JBGOFO010000006.1"/>
</dbReference>
<dbReference type="SMR" id="Q5HEL0"/>
<dbReference type="KEGG" id="sac:SACOL1973"/>
<dbReference type="HOGENOM" id="CLU_106166_1_0_9"/>
<dbReference type="Proteomes" id="UP000000530">
    <property type="component" value="Chromosome"/>
</dbReference>
<dbReference type="GO" id="GO:0005886">
    <property type="term" value="C:plasma membrane"/>
    <property type="evidence" value="ECO:0007669"/>
    <property type="project" value="UniProtKB-SubCell"/>
</dbReference>
<dbReference type="CDD" id="cd16381">
    <property type="entry name" value="YitT_C_like_1"/>
    <property type="match status" value="1"/>
</dbReference>
<dbReference type="HAMAP" id="MF_01515">
    <property type="entry name" value="UPF0316"/>
    <property type="match status" value="1"/>
</dbReference>
<dbReference type="InterPro" id="IPR019264">
    <property type="entry name" value="DUF2179"/>
</dbReference>
<dbReference type="InterPro" id="IPR044035">
    <property type="entry name" value="DUF5698"/>
</dbReference>
<dbReference type="InterPro" id="IPR022930">
    <property type="entry name" value="UPF0316"/>
</dbReference>
<dbReference type="NCBIfam" id="NF003190">
    <property type="entry name" value="PRK04164.1-1"/>
    <property type="match status" value="1"/>
</dbReference>
<dbReference type="NCBIfam" id="NF003194">
    <property type="entry name" value="PRK04164.1-5"/>
    <property type="match status" value="1"/>
</dbReference>
<dbReference type="PANTHER" id="PTHR40060">
    <property type="entry name" value="UPF0316 PROTEIN YEBE"/>
    <property type="match status" value="1"/>
</dbReference>
<dbReference type="PANTHER" id="PTHR40060:SF1">
    <property type="entry name" value="UPF0316 PROTEIN YEBE"/>
    <property type="match status" value="1"/>
</dbReference>
<dbReference type="Pfam" id="PF10035">
    <property type="entry name" value="DUF2179"/>
    <property type="match status" value="1"/>
</dbReference>
<dbReference type="Pfam" id="PF18955">
    <property type="entry name" value="DUF5698"/>
    <property type="match status" value="1"/>
</dbReference>
<comment type="subcellular location">
    <subcellularLocation>
        <location evidence="1">Cell membrane</location>
        <topology evidence="1">Multi-pass membrane protein</topology>
    </subcellularLocation>
</comment>
<comment type="similarity">
    <text evidence="1">Belongs to the UPF0316 family.</text>
</comment>
<evidence type="ECO:0000255" key="1">
    <source>
        <dbReference type="HAMAP-Rule" id="MF_01515"/>
    </source>
</evidence>
<organism>
    <name type="scientific">Staphylococcus aureus (strain COL)</name>
    <dbReference type="NCBI Taxonomy" id="93062"/>
    <lineage>
        <taxon>Bacteria</taxon>
        <taxon>Bacillati</taxon>
        <taxon>Bacillota</taxon>
        <taxon>Bacilli</taxon>
        <taxon>Bacillales</taxon>
        <taxon>Staphylococcaceae</taxon>
        <taxon>Staphylococcus</taxon>
    </lineage>
</organism>
<accession>Q5HEL0</accession>
<protein>
    <recommendedName>
        <fullName evidence="1">UPF0316 protein SACOL1973</fullName>
    </recommendedName>
</protein>
<gene>
    <name type="ordered locus">SACOL1973</name>
</gene>